<organism>
    <name type="scientific">Escherichia coli O7:K1 (strain IAI39 / ExPEC)</name>
    <dbReference type="NCBI Taxonomy" id="585057"/>
    <lineage>
        <taxon>Bacteria</taxon>
        <taxon>Pseudomonadati</taxon>
        <taxon>Pseudomonadota</taxon>
        <taxon>Gammaproteobacteria</taxon>
        <taxon>Enterobacterales</taxon>
        <taxon>Enterobacteriaceae</taxon>
        <taxon>Escherichia</taxon>
    </lineage>
</organism>
<dbReference type="EC" id="3.6.-.-" evidence="1"/>
<dbReference type="EMBL" id="CU928164">
    <property type="protein sequence ID" value="CAR20417.1"/>
    <property type="molecule type" value="Genomic_DNA"/>
</dbReference>
<dbReference type="RefSeq" id="WP_001282365.1">
    <property type="nucleotide sequence ID" value="NC_011750.1"/>
</dbReference>
<dbReference type="RefSeq" id="YP_002410185.1">
    <property type="nucleotide sequence ID" value="NC_011750.1"/>
</dbReference>
<dbReference type="SMR" id="B7NR09"/>
<dbReference type="STRING" id="585057.ECIAI39_4311"/>
<dbReference type="KEGG" id="ect:ECIAI39_4311"/>
<dbReference type="PATRIC" id="fig|585057.6.peg.4456"/>
<dbReference type="HOGENOM" id="CLU_019624_4_1_6"/>
<dbReference type="Proteomes" id="UP000000749">
    <property type="component" value="Chromosome"/>
</dbReference>
<dbReference type="GO" id="GO:0005829">
    <property type="term" value="C:cytosol"/>
    <property type="evidence" value="ECO:0007669"/>
    <property type="project" value="TreeGrafter"/>
</dbReference>
<dbReference type="GO" id="GO:0005525">
    <property type="term" value="F:GTP binding"/>
    <property type="evidence" value="ECO:0007669"/>
    <property type="project" value="UniProtKB-UniRule"/>
</dbReference>
<dbReference type="GO" id="GO:0003924">
    <property type="term" value="F:GTPase activity"/>
    <property type="evidence" value="ECO:0007669"/>
    <property type="project" value="UniProtKB-UniRule"/>
</dbReference>
<dbReference type="GO" id="GO:0046872">
    <property type="term" value="F:metal ion binding"/>
    <property type="evidence" value="ECO:0007669"/>
    <property type="project" value="UniProtKB-KW"/>
</dbReference>
<dbReference type="GO" id="GO:0030488">
    <property type="term" value="P:tRNA methylation"/>
    <property type="evidence" value="ECO:0007669"/>
    <property type="project" value="TreeGrafter"/>
</dbReference>
<dbReference type="GO" id="GO:0002098">
    <property type="term" value="P:tRNA wobble uridine modification"/>
    <property type="evidence" value="ECO:0007669"/>
    <property type="project" value="TreeGrafter"/>
</dbReference>
<dbReference type="CDD" id="cd04164">
    <property type="entry name" value="trmE"/>
    <property type="match status" value="1"/>
</dbReference>
<dbReference type="CDD" id="cd14858">
    <property type="entry name" value="TrmE_N"/>
    <property type="match status" value="1"/>
</dbReference>
<dbReference type="FunFam" id="3.30.1360.120:FF:000001">
    <property type="entry name" value="tRNA modification GTPase MnmE"/>
    <property type="match status" value="1"/>
</dbReference>
<dbReference type="FunFam" id="3.40.50.300:FF:000249">
    <property type="entry name" value="tRNA modification GTPase MnmE"/>
    <property type="match status" value="1"/>
</dbReference>
<dbReference type="Gene3D" id="3.40.50.300">
    <property type="entry name" value="P-loop containing nucleotide triphosphate hydrolases"/>
    <property type="match status" value="1"/>
</dbReference>
<dbReference type="Gene3D" id="3.30.1360.120">
    <property type="entry name" value="Probable tRNA modification gtpase trme, domain 1"/>
    <property type="match status" value="1"/>
</dbReference>
<dbReference type="Gene3D" id="1.20.120.430">
    <property type="entry name" value="tRNA modification GTPase MnmE domain 2"/>
    <property type="match status" value="1"/>
</dbReference>
<dbReference type="HAMAP" id="MF_00379">
    <property type="entry name" value="GTPase_MnmE"/>
    <property type="match status" value="1"/>
</dbReference>
<dbReference type="InterPro" id="IPR031168">
    <property type="entry name" value="G_TrmE"/>
</dbReference>
<dbReference type="InterPro" id="IPR006073">
    <property type="entry name" value="GTP-bd"/>
</dbReference>
<dbReference type="InterPro" id="IPR018948">
    <property type="entry name" value="GTP-bd_TrmE_N"/>
</dbReference>
<dbReference type="InterPro" id="IPR004520">
    <property type="entry name" value="GTPase_MnmE"/>
</dbReference>
<dbReference type="InterPro" id="IPR027368">
    <property type="entry name" value="MnmE_dom2"/>
</dbReference>
<dbReference type="InterPro" id="IPR025867">
    <property type="entry name" value="MnmE_helical"/>
</dbReference>
<dbReference type="InterPro" id="IPR027417">
    <property type="entry name" value="P-loop_NTPase"/>
</dbReference>
<dbReference type="InterPro" id="IPR005225">
    <property type="entry name" value="Small_GTP-bd"/>
</dbReference>
<dbReference type="InterPro" id="IPR027266">
    <property type="entry name" value="TrmE/GcvT_dom1"/>
</dbReference>
<dbReference type="NCBIfam" id="TIGR00450">
    <property type="entry name" value="mnmE_trmE_thdF"/>
    <property type="match status" value="1"/>
</dbReference>
<dbReference type="NCBIfam" id="NF003661">
    <property type="entry name" value="PRK05291.1-3"/>
    <property type="match status" value="1"/>
</dbReference>
<dbReference type="NCBIfam" id="TIGR00231">
    <property type="entry name" value="small_GTP"/>
    <property type="match status" value="1"/>
</dbReference>
<dbReference type="PANTHER" id="PTHR42714">
    <property type="entry name" value="TRNA MODIFICATION GTPASE GTPBP3"/>
    <property type="match status" value="1"/>
</dbReference>
<dbReference type="PANTHER" id="PTHR42714:SF2">
    <property type="entry name" value="TRNA MODIFICATION GTPASE GTPBP3, MITOCHONDRIAL"/>
    <property type="match status" value="1"/>
</dbReference>
<dbReference type="Pfam" id="PF01926">
    <property type="entry name" value="MMR_HSR1"/>
    <property type="match status" value="1"/>
</dbReference>
<dbReference type="Pfam" id="PF12631">
    <property type="entry name" value="MnmE_helical"/>
    <property type="match status" value="1"/>
</dbReference>
<dbReference type="Pfam" id="PF10396">
    <property type="entry name" value="TrmE_N"/>
    <property type="match status" value="1"/>
</dbReference>
<dbReference type="SUPFAM" id="SSF52540">
    <property type="entry name" value="P-loop containing nucleoside triphosphate hydrolases"/>
    <property type="match status" value="1"/>
</dbReference>
<dbReference type="SUPFAM" id="SSF116878">
    <property type="entry name" value="TrmE connector domain"/>
    <property type="match status" value="1"/>
</dbReference>
<dbReference type="PROSITE" id="PS51709">
    <property type="entry name" value="G_TRME"/>
    <property type="match status" value="1"/>
</dbReference>
<proteinExistence type="inferred from homology"/>
<reference key="1">
    <citation type="journal article" date="2009" name="PLoS Genet.">
        <title>Organised genome dynamics in the Escherichia coli species results in highly diverse adaptive paths.</title>
        <authorList>
            <person name="Touchon M."/>
            <person name="Hoede C."/>
            <person name="Tenaillon O."/>
            <person name="Barbe V."/>
            <person name="Baeriswyl S."/>
            <person name="Bidet P."/>
            <person name="Bingen E."/>
            <person name="Bonacorsi S."/>
            <person name="Bouchier C."/>
            <person name="Bouvet O."/>
            <person name="Calteau A."/>
            <person name="Chiapello H."/>
            <person name="Clermont O."/>
            <person name="Cruveiller S."/>
            <person name="Danchin A."/>
            <person name="Diard M."/>
            <person name="Dossat C."/>
            <person name="Karoui M.E."/>
            <person name="Frapy E."/>
            <person name="Garry L."/>
            <person name="Ghigo J.M."/>
            <person name="Gilles A.M."/>
            <person name="Johnson J."/>
            <person name="Le Bouguenec C."/>
            <person name="Lescat M."/>
            <person name="Mangenot S."/>
            <person name="Martinez-Jehanne V."/>
            <person name="Matic I."/>
            <person name="Nassif X."/>
            <person name="Oztas S."/>
            <person name="Petit M.A."/>
            <person name="Pichon C."/>
            <person name="Rouy Z."/>
            <person name="Ruf C.S."/>
            <person name="Schneider D."/>
            <person name="Tourret J."/>
            <person name="Vacherie B."/>
            <person name="Vallenet D."/>
            <person name="Medigue C."/>
            <person name="Rocha E.P.C."/>
            <person name="Denamur E."/>
        </authorList>
    </citation>
    <scope>NUCLEOTIDE SEQUENCE [LARGE SCALE GENOMIC DNA]</scope>
    <source>
        <strain>IAI39 / ExPEC</strain>
    </source>
</reference>
<comment type="function">
    <text evidence="1">Exhibits a very high intrinsic GTPase hydrolysis rate. Involved in the addition of a carboxymethylaminomethyl (cmnm) group at the wobble position (U34) of certain tRNAs, forming tRNA-cmnm(5)s(2)U34.</text>
</comment>
<comment type="cofactor">
    <cofactor evidence="1">
        <name>K(+)</name>
        <dbReference type="ChEBI" id="CHEBI:29103"/>
    </cofactor>
    <text evidence="1">Binds 1 potassium ion per subunit.</text>
</comment>
<comment type="subunit">
    <text evidence="1">Homodimer. Heterotetramer of two MnmE and two MnmG subunits.</text>
</comment>
<comment type="subcellular location">
    <subcellularLocation>
        <location evidence="1">Cytoplasm</location>
    </subcellularLocation>
</comment>
<comment type="similarity">
    <text evidence="1">Belongs to the TRAFAC class TrmE-Era-EngA-EngB-Septin-like GTPase superfamily. TrmE GTPase family.</text>
</comment>
<name>MNME_ECO7I</name>
<protein>
    <recommendedName>
        <fullName evidence="1">tRNA modification GTPase MnmE</fullName>
        <ecNumber evidence="1">3.6.-.-</ecNumber>
    </recommendedName>
</protein>
<feature type="chain" id="PRO_1000197050" description="tRNA modification GTPase MnmE">
    <location>
        <begin position="1"/>
        <end position="454"/>
    </location>
</feature>
<feature type="domain" description="TrmE-type G">
    <location>
        <begin position="216"/>
        <end position="377"/>
    </location>
</feature>
<feature type="binding site" evidence="1">
    <location>
        <position position="23"/>
    </location>
    <ligand>
        <name>(6S)-5-formyl-5,6,7,8-tetrahydrofolate</name>
        <dbReference type="ChEBI" id="CHEBI:57457"/>
    </ligand>
</feature>
<feature type="binding site" evidence="1">
    <location>
        <position position="80"/>
    </location>
    <ligand>
        <name>(6S)-5-formyl-5,6,7,8-tetrahydrofolate</name>
        <dbReference type="ChEBI" id="CHEBI:57457"/>
    </ligand>
</feature>
<feature type="binding site" evidence="1">
    <location>
        <position position="120"/>
    </location>
    <ligand>
        <name>(6S)-5-formyl-5,6,7,8-tetrahydrofolate</name>
        <dbReference type="ChEBI" id="CHEBI:57457"/>
    </ligand>
</feature>
<feature type="binding site" evidence="1">
    <location>
        <begin position="226"/>
        <end position="231"/>
    </location>
    <ligand>
        <name>GTP</name>
        <dbReference type="ChEBI" id="CHEBI:37565"/>
    </ligand>
</feature>
<feature type="binding site" evidence="1">
    <location>
        <position position="226"/>
    </location>
    <ligand>
        <name>K(+)</name>
        <dbReference type="ChEBI" id="CHEBI:29103"/>
    </ligand>
</feature>
<feature type="binding site" evidence="1">
    <location>
        <position position="230"/>
    </location>
    <ligand>
        <name>Mg(2+)</name>
        <dbReference type="ChEBI" id="CHEBI:18420"/>
    </ligand>
</feature>
<feature type="binding site" evidence="1">
    <location>
        <begin position="245"/>
        <end position="251"/>
    </location>
    <ligand>
        <name>GTP</name>
        <dbReference type="ChEBI" id="CHEBI:37565"/>
    </ligand>
</feature>
<feature type="binding site" evidence="1">
    <location>
        <position position="245"/>
    </location>
    <ligand>
        <name>K(+)</name>
        <dbReference type="ChEBI" id="CHEBI:29103"/>
    </ligand>
</feature>
<feature type="binding site" evidence="1">
    <location>
        <position position="247"/>
    </location>
    <ligand>
        <name>K(+)</name>
        <dbReference type="ChEBI" id="CHEBI:29103"/>
    </ligand>
</feature>
<feature type="binding site" evidence="1">
    <location>
        <position position="250"/>
    </location>
    <ligand>
        <name>K(+)</name>
        <dbReference type="ChEBI" id="CHEBI:29103"/>
    </ligand>
</feature>
<feature type="binding site" evidence="1">
    <location>
        <position position="251"/>
    </location>
    <ligand>
        <name>Mg(2+)</name>
        <dbReference type="ChEBI" id="CHEBI:18420"/>
    </ligand>
</feature>
<feature type="binding site" evidence="1">
    <location>
        <begin position="270"/>
        <end position="273"/>
    </location>
    <ligand>
        <name>GTP</name>
        <dbReference type="ChEBI" id="CHEBI:37565"/>
    </ligand>
</feature>
<feature type="binding site" evidence="1">
    <location>
        <begin position="335"/>
        <end position="338"/>
    </location>
    <ligand>
        <name>GTP</name>
        <dbReference type="ChEBI" id="CHEBI:37565"/>
    </ligand>
</feature>
<feature type="binding site" evidence="1">
    <location>
        <begin position="358"/>
        <end position="360"/>
    </location>
    <ligand>
        <name>GTP</name>
        <dbReference type="ChEBI" id="CHEBI:37565"/>
    </ligand>
</feature>
<feature type="binding site" evidence="1">
    <location>
        <position position="454"/>
    </location>
    <ligand>
        <name>(6S)-5-formyl-5,6,7,8-tetrahydrofolate</name>
        <dbReference type="ChEBI" id="CHEBI:57457"/>
    </ligand>
</feature>
<keyword id="KW-0963">Cytoplasm</keyword>
<keyword id="KW-0342">GTP-binding</keyword>
<keyword id="KW-0378">Hydrolase</keyword>
<keyword id="KW-0460">Magnesium</keyword>
<keyword id="KW-0479">Metal-binding</keyword>
<keyword id="KW-0547">Nucleotide-binding</keyword>
<keyword id="KW-0630">Potassium</keyword>
<keyword id="KW-0819">tRNA processing</keyword>
<gene>
    <name evidence="1" type="primary">mnmE</name>
    <name evidence="1" type="synonym">trmE</name>
    <name type="ordered locus">ECIAI39_4311</name>
</gene>
<sequence length="454" mass="49187">MSDNDTIVAQATPPGRGGVGILRISGLKAREVAETVLGKLPKPRYADYLPFKDADGSVLDQGIALWFPGPNSFTGEDVLELQGHGGPVILDLLLKRILTIPGLRIARPGEFSERAFLNDKLDLAQAEAIADLIDASSEQAARSALNSLQGAFSARVNHLVEALTHLRIYVEAAIDFPDEEIDFLSDGKIEAQLNDVIADLDAVRAEARQGSLLREGMKVVIAGRPNAGKSSLLNALAGREAAIVTDIAGTTRDVLREHIHIDGMPLHIIDTAGLREASDEVERIGIERAWQEIEQADRVLFMVDGTTTDAVDPAEIWSEFIARLPAKLPITVVRNKADITGETLGMSEVNGHALIRLSARTGEGVDVLRNHLKQSMGFDTNMEGGFLARRRHLQALEQAAEHLQQGKAQLLGAWAGELLAEELRLAQQNLSEITGEFTSDDLLGRIFSSFCIGK</sequence>
<accession>B7NR09</accession>
<evidence type="ECO:0000255" key="1">
    <source>
        <dbReference type="HAMAP-Rule" id="MF_00379"/>
    </source>
</evidence>